<protein>
    <recommendedName>
        <fullName>8-amino-7-oxononanoate synthase</fullName>
        <shortName>AONS</shortName>
        <ecNumber>2.3.1.47</ecNumber>
    </recommendedName>
    <alternativeName>
        <fullName>7-keto-8-amino-pelargonic acid synthase</fullName>
        <shortName>7-KAP synthase</shortName>
        <shortName>KAPA synthase</shortName>
    </alternativeName>
    <alternativeName>
        <fullName>8-amino-7-ketopelargonate synthase</fullName>
    </alternativeName>
    <alternativeName>
        <fullName>Alpha-oxoamine synthase</fullName>
    </alternativeName>
</protein>
<sequence>MKAATQARIDDSPLAWLDAVQRQRHEAGLRRCLRPRPAVATELDLASNDYLGLSRHPAVIDGGVQALRIWGAGATGSRLVTGDTKLHQQFEAELAEFVGAAAGLLFSSGYTANLGAVVGLSGPGSLLVSDARSHASLVDACRLSRARVVVTPHRDVDAVDAALRSRDEQRAVVVTDSVFSADGSLAPVRELLEVCRRHGALLLVDEAHGLGVRGGGRGLLYELGLAGAPDVVMTTTLSKALGSQGGVVLGPTPVRAHLIDAARPFIFDTGLAPAAVGAARAALRVLQAEPWRPQAVLNHAGELARMCGVAAVPDSAMVSVILGEPESAVAAAAACLDAGVKVGCFRPPTVPAGTSRLRLTARASLNAGELELARRVLTDVLAVARR</sequence>
<comment type="function">
    <text evidence="1">Catalyzes the decarboxylative condensation of pimeloyl-[acyl-carrier protein] and L-alanine to produce 8-amino-7-oxononanoate (AON), [acyl-carrier protein], and carbon dioxide.</text>
</comment>
<comment type="catalytic activity">
    <reaction>
        <text>6-carboxyhexanoyl-[ACP] + L-alanine + H(+) = (8S)-8-amino-7-oxononanoate + holo-[ACP] + CO2</text>
        <dbReference type="Rhea" id="RHEA:42288"/>
        <dbReference type="Rhea" id="RHEA-COMP:9685"/>
        <dbReference type="Rhea" id="RHEA-COMP:9955"/>
        <dbReference type="ChEBI" id="CHEBI:15378"/>
        <dbReference type="ChEBI" id="CHEBI:16526"/>
        <dbReference type="ChEBI" id="CHEBI:57972"/>
        <dbReference type="ChEBI" id="CHEBI:64479"/>
        <dbReference type="ChEBI" id="CHEBI:78846"/>
        <dbReference type="ChEBI" id="CHEBI:149468"/>
        <dbReference type="EC" id="2.3.1.47"/>
    </reaction>
</comment>
<comment type="cofactor">
    <cofactor evidence="1">
        <name>pyridoxal 5'-phosphate</name>
        <dbReference type="ChEBI" id="CHEBI:597326"/>
    </cofactor>
</comment>
<comment type="pathway">
    <text>Cofactor biosynthesis; biotin biosynthesis.</text>
</comment>
<comment type="subunit">
    <text evidence="1">Homodimer.</text>
</comment>
<comment type="similarity">
    <text evidence="2">Belongs to the class-II pyridoxal-phosphate-dependent aminotransferase family. BioF subfamily.</text>
</comment>
<keyword id="KW-0012">Acyltransferase</keyword>
<keyword id="KW-0093">Biotin biosynthesis</keyword>
<keyword id="KW-0663">Pyridoxal phosphate</keyword>
<keyword id="KW-0808">Transferase</keyword>
<proteinExistence type="inferred from homology"/>
<evidence type="ECO:0000250" key="1"/>
<evidence type="ECO:0000305" key="2"/>
<accession>A1KJ00</accession>
<name>BIOF_MYCBP</name>
<feature type="chain" id="PRO_0000381034" description="8-amino-7-oxononanoate synthase">
    <location>
        <begin position="1"/>
        <end position="386"/>
    </location>
</feature>
<feature type="binding site" evidence="1">
    <location>
        <position position="31"/>
    </location>
    <ligand>
        <name>substrate</name>
    </ligand>
</feature>
<feature type="binding site" evidence="1">
    <location>
        <begin position="109"/>
        <end position="110"/>
    </location>
    <ligand>
        <name>pyridoxal 5'-phosphate</name>
        <dbReference type="ChEBI" id="CHEBI:597326"/>
    </ligand>
</feature>
<feature type="binding site" evidence="1">
    <location>
        <position position="134"/>
    </location>
    <ligand>
        <name>substrate</name>
    </ligand>
</feature>
<feature type="binding site" evidence="1">
    <location>
        <position position="180"/>
    </location>
    <ligand>
        <name>pyridoxal 5'-phosphate</name>
        <dbReference type="ChEBI" id="CHEBI:597326"/>
    </ligand>
</feature>
<feature type="binding site" evidence="1">
    <location>
        <begin position="205"/>
        <end position="208"/>
    </location>
    <ligand>
        <name>pyridoxal 5'-phosphate</name>
        <dbReference type="ChEBI" id="CHEBI:597326"/>
    </ligand>
</feature>
<feature type="binding site" evidence="1">
    <location>
        <begin position="236"/>
        <end position="239"/>
    </location>
    <ligand>
        <name>pyridoxal 5'-phosphate</name>
        <dbReference type="ChEBI" id="CHEBI:597326"/>
    </ligand>
</feature>
<feature type="binding site" evidence="1">
    <location>
        <position position="349"/>
    </location>
    <ligand>
        <name>substrate</name>
    </ligand>
</feature>
<feature type="modified residue" description="N6-(pyridoxal phosphate)lysine" evidence="1">
    <location>
        <position position="239"/>
    </location>
</feature>
<reference key="1">
    <citation type="journal article" date="2007" name="Proc. Natl. Acad. Sci. U.S.A.">
        <title>Genome plasticity of BCG and impact on vaccine efficacy.</title>
        <authorList>
            <person name="Brosch R."/>
            <person name="Gordon S.V."/>
            <person name="Garnier T."/>
            <person name="Eiglmeier K."/>
            <person name="Frigui W."/>
            <person name="Valenti P."/>
            <person name="Dos Santos S."/>
            <person name="Duthoy S."/>
            <person name="Lacroix C."/>
            <person name="Garcia-Pelayo C."/>
            <person name="Inwald J.K."/>
            <person name="Golby P."/>
            <person name="Garcia J.N."/>
            <person name="Hewinson R.G."/>
            <person name="Behr M.A."/>
            <person name="Quail M.A."/>
            <person name="Churcher C."/>
            <person name="Barrell B.G."/>
            <person name="Parkhill J."/>
            <person name="Cole S.T."/>
        </authorList>
    </citation>
    <scope>NUCLEOTIDE SEQUENCE [LARGE SCALE GENOMIC DNA]</scope>
    <source>
        <strain>BCG / Pasteur 1173P2</strain>
    </source>
</reference>
<dbReference type="EC" id="2.3.1.47"/>
<dbReference type="EMBL" id="AM408590">
    <property type="protein sequence ID" value="CAL71609.1"/>
    <property type="molecule type" value="Genomic_DNA"/>
</dbReference>
<dbReference type="RefSeq" id="WP_003407805.1">
    <property type="nucleotide sequence ID" value="NC_008769.1"/>
</dbReference>
<dbReference type="SMR" id="A1KJ00"/>
<dbReference type="KEGG" id="mbb:BCG_1622"/>
<dbReference type="HOGENOM" id="CLU_015846_11_2_11"/>
<dbReference type="UniPathway" id="UPA00078"/>
<dbReference type="Proteomes" id="UP000001472">
    <property type="component" value="Chromosome"/>
</dbReference>
<dbReference type="GO" id="GO:0008710">
    <property type="term" value="F:8-amino-7-oxononanoate synthase activity"/>
    <property type="evidence" value="ECO:0007669"/>
    <property type="project" value="UniProtKB-EC"/>
</dbReference>
<dbReference type="GO" id="GO:0030170">
    <property type="term" value="F:pyridoxal phosphate binding"/>
    <property type="evidence" value="ECO:0007669"/>
    <property type="project" value="InterPro"/>
</dbReference>
<dbReference type="GO" id="GO:0009102">
    <property type="term" value="P:biotin biosynthetic process"/>
    <property type="evidence" value="ECO:0007669"/>
    <property type="project" value="UniProtKB-UniPathway"/>
</dbReference>
<dbReference type="FunFam" id="3.40.640.10:FF:000130">
    <property type="entry name" value="8-amino-7-oxononanoate synthase"/>
    <property type="match status" value="1"/>
</dbReference>
<dbReference type="Gene3D" id="3.90.1150.10">
    <property type="entry name" value="Aspartate Aminotransferase, domain 1"/>
    <property type="match status" value="1"/>
</dbReference>
<dbReference type="Gene3D" id="3.40.640.10">
    <property type="entry name" value="Type I PLP-dependent aspartate aminotransferase-like (Major domain)"/>
    <property type="match status" value="1"/>
</dbReference>
<dbReference type="InterPro" id="IPR001917">
    <property type="entry name" value="Aminotrans_II_pyridoxalP_BS"/>
</dbReference>
<dbReference type="InterPro" id="IPR004839">
    <property type="entry name" value="Aminotransferase_I/II_large"/>
</dbReference>
<dbReference type="InterPro" id="IPR050087">
    <property type="entry name" value="AON_synthase_class-II"/>
</dbReference>
<dbReference type="InterPro" id="IPR015424">
    <property type="entry name" value="PyrdxlP-dep_Trfase"/>
</dbReference>
<dbReference type="InterPro" id="IPR015421">
    <property type="entry name" value="PyrdxlP-dep_Trfase_major"/>
</dbReference>
<dbReference type="InterPro" id="IPR015422">
    <property type="entry name" value="PyrdxlP-dep_Trfase_small"/>
</dbReference>
<dbReference type="PANTHER" id="PTHR13693:SF100">
    <property type="entry name" value="8-AMINO-7-OXONONANOATE SYNTHASE"/>
    <property type="match status" value="1"/>
</dbReference>
<dbReference type="PANTHER" id="PTHR13693">
    <property type="entry name" value="CLASS II AMINOTRANSFERASE/8-AMINO-7-OXONONANOATE SYNTHASE"/>
    <property type="match status" value="1"/>
</dbReference>
<dbReference type="Pfam" id="PF00155">
    <property type="entry name" value="Aminotran_1_2"/>
    <property type="match status" value="1"/>
</dbReference>
<dbReference type="SUPFAM" id="SSF53383">
    <property type="entry name" value="PLP-dependent transferases"/>
    <property type="match status" value="1"/>
</dbReference>
<dbReference type="PROSITE" id="PS00599">
    <property type="entry name" value="AA_TRANSFER_CLASS_2"/>
    <property type="match status" value="1"/>
</dbReference>
<organism>
    <name type="scientific">Mycobacterium bovis (strain BCG / Pasteur 1173P2)</name>
    <dbReference type="NCBI Taxonomy" id="410289"/>
    <lineage>
        <taxon>Bacteria</taxon>
        <taxon>Bacillati</taxon>
        <taxon>Actinomycetota</taxon>
        <taxon>Actinomycetes</taxon>
        <taxon>Mycobacteriales</taxon>
        <taxon>Mycobacteriaceae</taxon>
        <taxon>Mycobacterium</taxon>
        <taxon>Mycobacterium tuberculosis complex</taxon>
    </lineage>
</organism>
<gene>
    <name type="ordered locus">BCG_1622</name>
</gene>